<evidence type="ECO:0000255" key="1">
    <source>
        <dbReference type="HAMAP-Rule" id="MF_00183"/>
    </source>
</evidence>
<comment type="function">
    <text evidence="1">Catalyzes the NADPH-dependent rearrangement and reduction of 1-deoxy-D-xylulose-5-phosphate (DXP) to 2-C-methyl-D-erythritol 4-phosphate (MEP).</text>
</comment>
<comment type="catalytic activity">
    <reaction evidence="1">
        <text>2-C-methyl-D-erythritol 4-phosphate + NADP(+) = 1-deoxy-D-xylulose 5-phosphate + NADPH + H(+)</text>
        <dbReference type="Rhea" id="RHEA:13717"/>
        <dbReference type="ChEBI" id="CHEBI:15378"/>
        <dbReference type="ChEBI" id="CHEBI:57783"/>
        <dbReference type="ChEBI" id="CHEBI:57792"/>
        <dbReference type="ChEBI" id="CHEBI:58262"/>
        <dbReference type="ChEBI" id="CHEBI:58349"/>
        <dbReference type="EC" id="1.1.1.267"/>
    </reaction>
    <physiologicalReaction direction="right-to-left" evidence="1">
        <dbReference type="Rhea" id="RHEA:13719"/>
    </physiologicalReaction>
</comment>
<comment type="cofactor">
    <cofactor evidence="1">
        <name>Mg(2+)</name>
        <dbReference type="ChEBI" id="CHEBI:18420"/>
    </cofactor>
    <cofactor evidence="1">
        <name>Mn(2+)</name>
        <dbReference type="ChEBI" id="CHEBI:29035"/>
    </cofactor>
</comment>
<comment type="pathway">
    <text evidence="1">Isoprenoid biosynthesis; isopentenyl diphosphate biosynthesis via DXP pathway; isopentenyl diphosphate from 1-deoxy-D-xylulose 5-phosphate: step 1/6.</text>
</comment>
<comment type="similarity">
    <text evidence="1">Belongs to the DXR family.</text>
</comment>
<name>DXR_CYAP4</name>
<organism>
    <name type="scientific">Cyanothece sp. (strain PCC 7425 / ATCC 29141)</name>
    <dbReference type="NCBI Taxonomy" id="395961"/>
    <lineage>
        <taxon>Bacteria</taxon>
        <taxon>Bacillati</taxon>
        <taxon>Cyanobacteriota</taxon>
        <taxon>Cyanophyceae</taxon>
        <taxon>Gomontiellales</taxon>
        <taxon>Cyanothecaceae</taxon>
        <taxon>Cyanothece</taxon>
    </lineage>
</organism>
<proteinExistence type="inferred from homology"/>
<keyword id="KW-0414">Isoprene biosynthesis</keyword>
<keyword id="KW-0464">Manganese</keyword>
<keyword id="KW-0479">Metal-binding</keyword>
<keyword id="KW-0521">NADP</keyword>
<keyword id="KW-0560">Oxidoreductase</keyword>
<feature type="chain" id="PRO_1000124089" description="1-deoxy-D-xylulose 5-phosphate reductoisomerase">
    <location>
        <begin position="1"/>
        <end position="387"/>
    </location>
</feature>
<feature type="binding site" evidence="1">
    <location>
        <position position="10"/>
    </location>
    <ligand>
        <name>NADPH</name>
        <dbReference type="ChEBI" id="CHEBI:57783"/>
    </ligand>
</feature>
<feature type="binding site" evidence="1">
    <location>
        <position position="11"/>
    </location>
    <ligand>
        <name>NADPH</name>
        <dbReference type="ChEBI" id="CHEBI:57783"/>
    </ligand>
</feature>
<feature type="binding site" evidence="1">
    <location>
        <position position="12"/>
    </location>
    <ligand>
        <name>NADPH</name>
        <dbReference type="ChEBI" id="CHEBI:57783"/>
    </ligand>
</feature>
<feature type="binding site" evidence="1">
    <location>
        <position position="13"/>
    </location>
    <ligand>
        <name>NADPH</name>
        <dbReference type="ChEBI" id="CHEBI:57783"/>
    </ligand>
</feature>
<feature type="binding site" evidence="1">
    <location>
        <position position="36"/>
    </location>
    <ligand>
        <name>NADPH</name>
        <dbReference type="ChEBI" id="CHEBI:57783"/>
    </ligand>
</feature>
<feature type="binding site" evidence="1">
    <location>
        <position position="37"/>
    </location>
    <ligand>
        <name>NADPH</name>
        <dbReference type="ChEBI" id="CHEBI:57783"/>
    </ligand>
</feature>
<feature type="binding site" evidence="1">
    <location>
        <position position="124"/>
    </location>
    <ligand>
        <name>NADPH</name>
        <dbReference type="ChEBI" id="CHEBI:57783"/>
    </ligand>
</feature>
<feature type="binding site" evidence="1">
    <location>
        <position position="125"/>
    </location>
    <ligand>
        <name>1-deoxy-D-xylulose 5-phosphate</name>
        <dbReference type="ChEBI" id="CHEBI:57792"/>
    </ligand>
</feature>
<feature type="binding site" evidence="1">
    <location>
        <position position="126"/>
    </location>
    <ligand>
        <name>NADPH</name>
        <dbReference type="ChEBI" id="CHEBI:57783"/>
    </ligand>
</feature>
<feature type="binding site" evidence="1">
    <location>
        <position position="150"/>
    </location>
    <ligand>
        <name>Mn(2+)</name>
        <dbReference type="ChEBI" id="CHEBI:29035"/>
    </ligand>
</feature>
<feature type="binding site" evidence="1">
    <location>
        <position position="151"/>
    </location>
    <ligand>
        <name>1-deoxy-D-xylulose 5-phosphate</name>
        <dbReference type="ChEBI" id="CHEBI:57792"/>
    </ligand>
</feature>
<feature type="binding site" evidence="1">
    <location>
        <position position="152"/>
    </location>
    <ligand>
        <name>1-deoxy-D-xylulose 5-phosphate</name>
        <dbReference type="ChEBI" id="CHEBI:57792"/>
    </ligand>
</feature>
<feature type="binding site" evidence="1">
    <location>
        <position position="152"/>
    </location>
    <ligand>
        <name>Mn(2+)</name>
        <dbReference type="ChEBI" id="CHEBI:29035"/>
    </ligand>
</feature>
<feature type="binding site" evidence="1">
    <location>
        <position position="176"/>
    </location>
    <ligand>
        <name>1-deoxy-D-xylulose 5-phosphate</name>
        <dbReference type="ChEBI" id="CHEBI:57792"/>
    </ligand>
</feature>
<feature type="binding site" evidence="1">
    <location>
        <position position="199"/>
    </location>
    <ligand>
        <name>1-deoxy-D-xylulose 5-phosphate</name>
        <dbReference type="ChEBI" id="CHEBI:57792"/>
    </ligand>
</feature>
<feature type="binding site" evidence="1">
    <location>
        <position position="205"/>
    </location>
    <ligand>
        <name>NADPH</name>
        <dbReference type="ChEBI" id="CHEBI:57783"/>
    </ligand>
</feature>
<feature type="binding site" evidence="1">
    <location>
        <position position="212"/>
    </location>
    <ligand>
        <name>1-deoxy-D-xylulose 5-phosphate</name>
        <dbReference type="ChEBI" id="CHEBI:57792"/>
    </ligand>
</feature>
<feature type="binding site" evidence="1">
    <location>
        <position position="217"/>
    </location>
    <ligand>
        <name>1-deoxy-D-xylulose 5-phosphate</name>
        <dbReference type="ChEBI" id="CHEBI:57792"/>
    </ligand>
</feature>
<feature type="binding site" evidence="1">
    <location>
        <position position="218"/>
    </location>
    <ligand>
        <name>1-deoxy-D-xylulose 5-phosphate</name>
        <dbReference type="ChEBI" id="CHEBI:57792"/>
    </ligand>
</feature>
<feature type="binding site" evidence="1">
    <location>
        <position position="221"/>
    </location>
    <ligand>
        <name>1-deoxy-D-xylulose 5-phosphate</name>
        <dbReference type="ChEBI" id="CHEBI:57792"/>
    </ligand>
</feature>
<feature type="binding site" evidence="1">
    <location>
        <position position="221"/>
    </location>
    <ligand>
        <name>Mn(2+)</name>
        <dbReference type="ChEBI" id="CHEBI:29035"/>
    </ligand>
</feature>
<gene>
    <name evidence="1" type="primary">dxr</name>
    <name type="ordered locus">Cyan7425_3999</name>
</gene>
<accession>B8HVK1</accession>
<sequence length="387" mass="41646">MKAITLLGSTGSIGTQTLDIVAQYPDQFRIVGLAAGRSLDKLIPQIRQFRPQIVALADEQQLDDLKAAIADLDPQPILVAGPAGVCEVAAYGDAKTVVTGIVGCAGLLPTIAAIKAGKDIALANKETLIAGGPVVLPLVEQYGVKLLPADSEHSAIFQCLQGVPAGGLRRILLTASGGAFRDWPVDKLGQVTIADALKHPNWSMGQKITVDSATLMNKGLEVIEAHYLFGLDYDHIEIIIHPQSIIHSLIEVQDTSVLAQLGWPDMRLPVLYAMSWPERIATDWPRLDLLKAGDLTFKEPDHAKYPCMKLAYAVGRAGGAMPAVLNAANEQAVALFLAERIAFLDIPRLIEQTCDRFSSKNCAEPSLEDILAADQWARQEVLLASQN</sequence>
<reference key="1">
    <citation type="journal article" date="2011" name="MBio">
        <title>Novel metabolic attributes of the genus Cyanothece, comprising a group of unicellular nitrogen-fixing Cyanobacteria.</title>
        <authorList>
            <person name="Bandyopadhyay A."/>
            <person name="Elvitigala T."/>
            <person name="Welsh E."/>
            <person name="Stockel J."/>
            <person name="Liberton M."/>
            <person name="Min H."/>
            <person name="Sherman L.A."/>
            <person name="Pakrasi H.B."/>
        </authorList>
    </citation>
    <scope>NUCLEOTIDE SEQUENCE [LARGE SCALE GENOMIC DNA]</scope>
    <source>
        <strain>PCC 7425 / ATCC 29141</strain>
    </source>
</reference>
<protein>
    <recommendedName>
        <fullName evidence="1">1-deoxy-D-xylulose 5-phosphate reductoisomerase</fullName>
        <shortName evidence="1">DXP reductoisomerase</shortName>
        <ecNumber evidence="1">1.1.1.267</ecNumber>
    </recommendedName>
    <alternativeName>
        <fullName evidence="1">1-deoxyxylulose-5-phosphate reductoisomerase</fullName>
    </alternativeName>
    <alternativeName>
        <fullName evidence="1">2-C-methyl-D-erythritol 4-phosphate synthase</fullName>
    </alternativeName>
</protein>
<dbReference type="EC" id="1.1.1.267" evidence="1"/>
<dbReference type="EMBL" id="CP001344">
    <property type="protein sequence ID" value="ACL46313.1"/>
    <property type="molecule type" value="Genomic_DNA"/>
</dbReference>
<dbReference type="SMR" id="B8HVK1"/>
<dbReference type="STRING" id="395961.Cyan7425_3999"/>
<dbReference type="KEGG" id="cyn:Cyan7425_3999"/>
<dbReference type="eggNOG" id="COG0743">
    <property type="taxonomic scope" value="Bacteria"/>
</dbReference>
<dbReference type="HOGENOM" id="CLU_035714_4_0_3"/>
<dbReference type="OrthoDB" id="9806546at2"/>
<dbReference type="UniPathway" id="UPA00056">
    <property type="reaction ID" value="UER00092"/>
</dbReference>
<dbReference type="GO" id="GO:0030604">
    <property type="term" value="F:1-deoxy-D-xylulose-5-phosphate reductoisomerase activity"/>
    <property type="evidence" value="ECO:0007669"/>
    <property type="project" value="UniProtKB-UniRule"/>
</dbReference>
<dbReference type="GO" id="GO:0030145">
    <property type="term" value="F:manganese ion binding"/>
    <property type="evidence" value="ECO:0007669"/>
    <property type="project" value="TreeGrafter"/>
</dbReference>
<dbReference type="GO" id="GO:0070402">
    <property type="term" value="F:NADPH binding"/>
    <property type="evidence" value="ECO:0007669"/>
    <property type="project" value="InterPro"/>
</dbReference>
<dbReference type="GO" id="GO:0051484">
    <property type="term" value="P:isopentenyl diphosphate biosynthetic process, methylerythritol 4-phosphate pathway involved in terpenoid biosynthetic process"/>
    <property type="evidence" value="ECO:0007669"/>
    <property type="project" value="TreeGrafter"/>
</dbReference>
<dbReference type="FunFam" id="3.40.50.720:FF:000183">
    <property type="entry name" value="1-deoxy-D-xylulose 5-phosphate reductoisomerase, chloroplastic"/>
    <property type="match status" value="1"/>
</dbReference>
<dbReference type="Gene3D" id="1.10.1740.10">
    <property type="match status" value="1"/>
</dbReference>
<dbReference type="Gene3D" id="3.40.50.720">
    <property type="entry name" value="NAD(P)-binding Rossmann-like Domain"/>
    <property type="match status" value="1"/>
</dbReference>
<dbReference type="HAMAP" id="MF_00183">
    <property type="entry name" value="DXP_reductoisom"/>
    <property type="match status" value="1"/>
</dbReference>
<dbReference type="InterPro" id="IPR003821">
    <property type="entry name" value="DXP_reductoisomerase"/>
</dbReference>
<dbReference type="InterPro" id="IPR013644">
    <property type="entry name" value="DXP_reductoisomerase_C"/>
</dbReference>
<dbReference type="InterPro" id="IPR013512">
    <property type="entry name" value="DXP_reductoisomerase_N"/>
</dbReference>
<dbReference type="InterPro" id="IPR026877">
    <property type="entry name" value="DXPR_C"/>
</dbReference>
<dbReference type="InterPro" id="IPR036169">
    <property type="entry name" value="DXPR_C_sf"/>
</dbReference>
<dbReference type="InterPro" id="IPR036291">
    <property type="entry name" value="NAD(P)-bd_dom_sf"/>
</dbReference>
<dbReference type="NCBIfam" id="TIGR00243">
    <property type="entry name" value="Dxr"/>
    <property type="match status" value="1"/>
</dbReference>
<dbReference type="NCBIfam" id="NF009114">
    <property type="entry name" value="PRK12464.1"/>
    <property type="match status" value="1"/>
</dbReference>
<dbReference type="PANTHER" id="PTHR30525">
    <property type="entry name" value="1-DEOXY-D-XYLULOSE 5-PHOSPHATE REDUCTOISOMERASE"/>
    <property type="match status" value="1"/>
</dbReference>
<dbReference type="PANTHER" id="PTHR30525:SF0">
    <property type="entry name" value="1-DEOXY-D-XYLULOSE 5-PHOSPHATE REDUCTOISOMERASE, CHLOROPLASTIC"/>
    <property type="match status" value="1"/>
</dbReference>
<dbReference type="Pfam" id="PF08436">
    <property type="entry name" value="DXP_redisom_C"/>
    <property type="match status" value="1"/>
</dbReference>
<dbReference type="Pfam" id="PF02670">
    <property type="entry name" value="DXP_reductoisom"/>
    <property type="match status" value="1"/>
</dbReference>
<dbReference type="Pfam" id="PF13288">
    <property type="entry name" value="DXPR_C"/>
    <property type="match status" value="1"/>
</dbReference>
<dbReference type="PIRSF" id="PIRSF006205">
    <property type="entry name" value="Dxp_reductismrs"/>
    <property type="match status" value="1"/>
</dbReference>
<dbReference type="SUPFAM" id="SSF69055">
    <property type="entry name" value="1-deoxy-D-xylulose-5-phosphate reductoisomerase, C-terminal domain"/>
    <property type="match status" value="1"/>
</dbReference>
<dbReference type="SUPFAM" id="SSF55347">
    <property type="entry name" value="Glyceraldehyde-3-phosphate dehydrogenase-like, C-terminal domain"/>
    <property type="match status" value="1"/>
</dbReference>
<dbReference type="SUPFAM" id="SSF51735">
    <property type="entry name" value="NAD(P)-binding Rossmann-fold domains"/>
    <property type="match status" value="1"/>
</dbReference>